<sequence>MSELHSLLTFPVRPISEEHYLGELSRFLKAGIPATYTLEQVAAFERSELREDADEVSDEEEQSNTTPLHILARSLPGNLSDDEEQVVLHMMDMLFEYGAGWNFIDFENKTVGDLILERNGGNRESPLYQRVVEAGVSAELLLRKLNGGDVEFIDENEIDICAEASAEVVPKDALDDSTGKVSSVSDDDATAADPDTYLNTKLKYTEDALITENNKDGVMMDWETDIMKLAADTLVSRKPVGESVVLNIGFGMGIIDTFIQERNPKKHYICEAHPDVLKKMKNDGWYQKPNVVILEGKWQDSLNKLLDEGNVFFDGIYYDTFSEHYEDMLDLYDIVVGLVNPEGVFSFFNGLGADRPLCYDVYKKIVEVDVATYGMNCEYTYVDLKGKLPDWKDVKRSYYNCEYYYHPKISFA</sequence>
<gene>
    <name evidence="1" type="primary">RMT2</name>
    <name type="ordered locus">CAGL0K06457g</name>
</gene>
<comment type="function">
    <text evidence="1">S-adenosyl-L-methionine-dependent protein-arginine N-methyltransferase that methylates the delta-nitrogen atom of arginine residues to form N5-methylarginine (type IV) in target proteins. Monomethylates ribosomal protein L12.</text>
</comment>
<comment type="subunit">
    <text evidence="1">Monomer.</text>
</comment>
<comment type="subcellular location">
    <subcellularLocation>
        <location evidence="1">Cytoplasm</location>
    </subcellularLocation>
    <subcellularLocation>
        <location evidence="1">Nucleus</location>
    </subcellularLocation>
</comment>
<comment type="similarity">
    <text evidence="2">Belongs to the class I-like SAM-binding methyltransferase superfamily. RMT2 methyltransferase family.</text>
</comment>
<organism>
    <name type="scientific">Candida glabrata (strain ATCC 2001 / BCRC 20586 / JCM 3761 / NBRC 0622 / NRRL Y-65 / CBS 138)</name>
    <name type="common">Yeast</name>
    <name type="synonym">Nakaseomyces glabratus</name>
    <dbReference type="NCBI Taxonomy" id="284593"/>
    <lineage>
        <taxon>Eukaryota</taxon>
        <taxon>Fungi</taxon>
        <taxon>Dikarya</taxon>
        <taxon>Ascomycota</taxon>
        <taxon>Saccharomycotina</taxon>
        <taxon>Saccharomycetes</taxon>
        <taxon>Saccharomycetales</taxon>
        <taxon>Saccharomycetaceae</taxon>
        <taxon>Nakaseomyces</taxon>
    </lineage>
</organism>
<evidence type="ECO:0000250" key="1">
    <source>
        <dbReference type="UniProtKB" id="Q03305"/>
    </source>
</evidence>
<evidence type="ECO:0000255" key="2">
    <source>
        <dbReference type="PROSITE-ProRule" id="PRU00892"/>
    </source>
</evidence>
<proteinExistence type="inferred from homology"/>
<reference key="1">
    <citation type="journal article" date="2004" name="Nature">
        <title>Genome evolution in yeasts.</title>
        <authorList>
            <person name="Dujon B."/>
            <person name="Sherman D."/>
            <person name="Fischer G."/>
            <person name="Durrens P."/>
            <person name="Casaregola S."/>
            <person name="Lafontaine I."/>
            <person name="de Montigny J."/>
            <person name="Marck C."/>
            <person name="Neuveglise C."/>
            <person name="Talla E."/>
            <person name="Goffard N."/>
            <person name="Frangeul L."/>
            <person name="Aigle M."/>
            <person name="Anthouard V."/>
            <person name="Babour A."/>
            <person name="Barbe V."/>
            <person name="Barnay S."/>
            <person name="Blanchin S."/>
            <person name="Beckerich J.-M."/>
            <person name="Beyne E."/>
            <person name="Bleykasten C."/>
            <person name="Boisrame A."/>
            <person name="Boyer J."/>
            <person name="Cattolico L."/>
            <person name="Confanioleri F."/>
            <person name="de Daruvar A."/>
            <person name="Despons L."/>
            <person name="Fabre E."/>
            <person name="Fairhead C."/>
            <person name="Ferry-Dumazet H."/>
            <person name="Groppi A."/>
            <person name="Hantraye F."/>
            <person name="Hennequin C."/>
            <person name="Jauniaux N."/>
            <person name="Joyet P."/>
            <person name="Kachouri R."/>
            <person name="Kerrest A."/>
            <person name="Koszul R."/>
            <person name="Lemaire M."/>
            <person name="Lesur I."/>
            <person name="Ma L."/>
            <person name="Muller H."/>
            <person name="Nicaud J.-M."/>
            <person name="Nikolski M."/>
            <person name="Oztas S."/>
            <person name="Ozier-Kalogeropoulos O."/>
            <person name="Pellenz S."/>
            <person name="Potier S."/>
            <person name="Richard G.-F."/>
            <person name="Straub M.-L."/>
            <person name="Suleau A."/>
            <person name="Swennen D."/>
            <person name="Tekaia F."/>
            <person name="Wesolowski-Louvel M."/>
            <person name="Westhof E."/>
            <person name="Wirth B."/>
            <person name="Zeniou-Meyer M."/>
            <person name="Zivanovic Y."/>
            <person name="Bolotin-Fukuhara M."/>
            <person name="Thierry A."/>
            <person name="Bouchier C."/>
            <person name="Caudron B."/>
            <person name="Scarpelli C."/>
            <person name="Gaillardin C."/>
            <person name="Weissenbach J."/>
            <person name="Wincker P."/>
            <person name="Souciet J.-L."/>
        </authorList>
    </citation>
    <scope>NUCLEOTIDE SEQUENCE [LARGE SCALE GENOMIC DNA]</scope>
    <source>
        <strain>ATCC 2001 / BCRC 20586 / JCM 3761 / NBRC 0622 / NRRL Y-65 / CBS 138</strain>
    </source>
</reference>
<dbReference type="EC" id="2.1.1.-" evidence="1"/>
<dbReference type="EMBL" id="CR380957">
    <property type="protein sequence ID" value="CAG61465.1"/>
    <property type="molecule type" value="Genomic_DNA"/>
</dbReference>
<dbReference type="RefSeq" id="XP_448504.1">
    <property type="nucleotide sequence ID" value="XM_448504.1"/>
</dbReference>
<dbReference type="SMR" id="Q6FMP0"/>
<dbReference type="FunCoup" id="Q6FMP0">
    <property type="interactions" value="420"/>
</dbReference>
<dbReference type="STRING" id="284593.Q6FMP0"/>
<dbReference type="EnsemblFungi" id="CAGL0K06457g-T">
    <property type="protein sequence ID" value="CAGL0K06457g-T-p1"/>
    <property type="gene ID" value="CAGL0K06457g"/>
</dbReference>
<dbReference type="KEGG" id="cgr:2890436"/>
<dbReference type="CGD" id="CAL0134911">
    <property type="gene designation" value="CAGL0K06457g"/>
</dbReference>
<dbReference type="VEuPathDB" id="FungiDB:CAGL0K06457g"/>
<dbReference type="eggNOG" id="KOG1709">
    <property type="taxonomic scope" value="Eukaryota"/>
</dbReference>
<dbReference type="HOGENOM" id="CLU_033831_0_0_1"/>
<dbReference type="InParanoid" id="Q6FMP0"/>
<dbReference type="OMA" id="NYYYHPR"/>
<dbReference type="Proteomes" id="UP000002428">
    <property type="component" value="Chromosome K"/>
</dbReference>
<dbReference type="GO" id="GO:0005737">
    <property type="term" value="C:cytoplasm"/>
    <property type="evidence" value="ECO:0007669"/>
    <property type="project" value="UniProtKB-SubCell"/>
</dbReference>
<dbReference type="GO" id="GO:0005634">
    <property type="term" value="C:nucleus"/>
    <property type="evidence" value="ECO:0007669"/>
    <property type="project" value="UniProtKB-SubCell"/>
</dbReference>
<dbReference type="GO" id="GO:0019702">
    <property type="term" value="F:protein arginine N5-methyltransferase activity"/>
    <property type="evidence" value="ECO:0007669"/>
    <property type="project" value="EnsemblFungi"/>
</dbReference>
<dbReference type="GO" id="GO:0032259">
    <property type="term" value="P:methylation"/>
    <property type="evidence" value="ECO:0007669"/>
    <property type="project" value="UniProtKB-KW"/>
</dbReference>
<dbReference type="CDD" id="cd02440">
    <property type="entry name" value="AdoMet_MTases"/>
    <property type="match status" value="1"/>
</dbReference>
<dbReference type="FunFam" id="3.40.50.150:FF:000310">
    <property type="entry name" value="Arginine N-methyltransferase 2"/>
    <property type="match status" value="1"/>
</dbReference>
<dbReference type="Gene3D" id="3.40.50.150">
    <property type="entry name" value="Vaccinia Virus protein VP39"/>
    <property type="match status" value="1"/>
</dbReference>
<dbReference type="InterPro" id="IPR017408">
    <property type="entry name" value="Arginine_N-MeTrfase_2"/>
</dbReference>
<dbReference type="InterPro" id="IPR051038">
    <property type="entry name" value="RMT2/GAMT_Mtase"/>
</dbReference>
<dbReference type="InterPro" id="IPR026480">
    <property type="entry name" value="RMT2_dom"/>
</dbReference>
<dbReference type="InterPro" id="IPR029063">
    <property type="entry name" value="SAM-dependent_MTases_sf"/>
</dbReference>
<dbReference type="PANTHER" id="PTHR32379">
    <property type="entry name" value="GUANIDINOACETATE N-METHYLTRANSFERASE"/>
    <property type="match status" value="1"/>
</dbReference>
<dbReference type="PANTHER" id="PTHR32379:SF1">
    <property type="entry name" value="GUANIDINOACETATE N-METHYLTRANSFERASE"/>
    <property type="match status" value="1"/>
</dbReference>
<dbReference type="PIRSF" id="PIRSF038148">
    <property type="entry name" value="Arginine_N-mtfrase-2"/>
    <property type="match status" value="1"/>
</dbReference>
<dbReference type="SUPFAM" id="SSF53335">
    <property type="entry name" value="S-adenosyl-L-methionine-dependent methyltransferases"/>
    <property type="match status" value="1"/>
</dbReference>
<dbReference type="PROSITE" id="PS51559">
    <property type="entry name" value="SAM_RMT2"/>
    <property type="match status" value="1"/>
</dbReference>
<accession>Q6FMP0</accession>
<protein>
    <recommendedName>
        <fullName evidence="1">Protein arginine N-methyltransferase 2</fullName>
        <ecNumber evidence="1">2.1.1.-</ecNumber>
    </recommendedName>
    <alternativeName>
        <fullName evidence="1">Protein-arginine N5-methyltransferase</fullName>
    </alternativeName>
    <alternativeName>
        <fullName evidence="1">Type IV protein arginine N-methyltransferase</fullName>
        <shortName evidence="1">Type IV PRMT</shortName>
    </alternativeName>
</protein>
<name>RMT2_CANGA</name>
<feature type="chain" id="PRO_0000228972" description="Protein arginine N-methyltransferase 2">
    <location>
        <begin position="1"/>
        <end position="412"/>
    </location>
</feature>
<feature type="domain" description="RMT2" evidence="2">
    <location>
        <begin position="190"/>
        <end position="412"/>
    </location>
</feature>
<feature type="binding site" evidence="2">
    <location>
        <position position="197"/>
    </location>
    <ligand>
        <name>S-adenosyl-L-methionine</name>
        <dbReference type="ChEBI" id="CHEBI:59789"/>
    </ligand>
</feature>
<feature type="binding site" evidence="2">
    <location>
        <position position="227"/>
    </location>
    <ligand>
        <name>S-adenosyl-L-methionine</name>
        <dbReference type="ChEBI" id="CHEBI:59789"/>
    </ligand>
</feature>
<feature type="binding site" evidence="2">
    <location>
        <begin position="250"/>
        <end position="255"/>
    </location>
    <ligand>
        <name>S-adenosyl-L-methionine</name>
        <dbReference type="ChEBI" id="CHEBI:59789"/>
    </ligand>
</feature>
<feature type="binding site" evidence="2">
    <location>
        <begin position="271"/>
        <end position="273"/>
    </location>
    <ligand>
        <name>S-adenosyl-L-methionine</name>
        <dbReference type="ChEBI" id="CHEBI:59789"/>
    </ligand>
</feature>
<feature type="binding site" evidence="2">
    <location>
        <begin position="298"/>
        <end position="299"/>
    </location>
    <ligand>
        <name>S-adenosyl-L-methionine</name>
        <dbReference type="ChEBI" id="CHEBI:59789"/>
    </ligand>
</feature>
<feature type="binding site" evidence="2">
    <location>
        <position position="319"/>
    </location>
    <ligand>
        <name>S-adenosyl-L-methionine</name>
        <dbReference type="ChEBI" id="CHEBI:59789"/>
    </ligand>
</feature>
<keyword id="KW-0963">Cytoplasm</keyword>
<keyword id="KW-0489">Methyltransferase</keyword>
<keyword id="KW-0539">Nucleus</keyword>
<keyword id="KW-1185">Reference proteome</keyword>
<keyword id="KW-0949">S-adenosyl-L-methionine</keyword>
<keyword id="KW-0808">Transferase</keyword>